<proteinExistence type="inferred from homology"/>
<organismHost>
    <name type="scientific">Artibeus</name>
    <name type="common">neotropical fruit bats</name>
    <dbReference type="NCBI Taxonomy" id="9416"/>
</organismHost>
<evidence type="ECO:0000250" key="1">
    <source>
        <dbReference type="UniProtKB" id="P26313"/>
    </source>
</evidence>
<evidence type="ECO:0000255" key="2">
    <source>
        <dbReference type="HAMAP-Rule" id="MF_04084"/>
    </source>
</evidence>
<accession>P31842</accession>
<name>GLYC_TACV7</name>
<protein>
    <recommendedName>
        <fullName evidence="2">Pre-glycoprotein polyprotein GP complex</fullName>
        <shortName evidence="2">Pre-GP-C</shortName>
    </recommendedName>
    <component>
        <recommendedName>
            <fullName evidence="2">Stable signal peptide</fullName>
            <shortName evidence="2">SSP</shortName>
        </recommendedName>
    </component>
    <component>
        <recommendedName>
            <fullName evidence="2">Glycoprotein G1</fullName>
            <shortName evidence="2">GP1</shortName>
        </recommendedName>
    </component>
    <component>
        <recommendedName>
            <fullName evidence="2">Glycoprotein G2</fullName>
            <shortName evidence="2">GP2</shortName>
        </recommendedName>
    </component>
</protein>
<organism>
    <name type="scientific">Tacaribe virus (strain V7)</name>
    <name type="common">TCRV</name>
    <dbReference type="NCBI Taxonomy" id="31616"/>
    <lineage>
        <taxon>Viruses</taxon>
        <taxon>Riboviria</taxon>
        <taxon>Orthornavirae</taxon>
        <taxon>Negarnaviricota</taxon>
        <taxon>Polyploviricotina</taxon>
        <taxon>Ellioviricetes</taxon>
        <taxon>Bunyavirales</taxon>
        <taxon>Arenaviridae</taxon>
        <taxon>Mammarenavirus</taxon>
        <taxon>Tacaribe virus</taxon>
    </lineage>
</organism>
<sequence length="482" mass="55607">MGQFISFMQEIPIFLQEALNIALVAVSLICIVKGLVNLYRCGLFQLMVFLVLAGRSCSEETFKIGMHTQFQEVSLSLSALLTNQSHELPMLCLANKTHLYLKSGRSSFKINIDSVTVLTRSADVFVHSPKLGSCFESDEEWVVAWWIEAIGHRWDQDPGLLCRNKTKTEGKLIQINISRADGNVHYGWRLKNGLDHIYRGREEPCFEGKQCLIKIQPEDWPTDCKADHTNTFRFLSRSQKSIAVGRTLKAFFSWSLTDPLGNEAPGGYCLEKWMLVASELKCFGTLQCQVQPKSRLRVCDMLRLFDYNKNAIKTLNEETKTRVNVLSHTINALISDNLLMKNKIRELMSVPYCNYTRFWYVNHTLSGQHSLPRCWMIRNNSYLNSSEFRNEWILESDFLISEMLSKEYSERQGRTPITLVDICFWSTEFFISTLFLHLIGFPTHEHIRGEGCPLPHRLNSMGGCRCGKYLPLKKPTIWHRRH</sequence>
<dbReference type="PIR" id="JQ1455">
    <property type="entry name" value="VGXPT7"/>
</dbReference>
<dbReference type="SMR" id="P31842"/>
<dbReference type="GlyCosmos" id="P31842">
    <property type="glycosylation" value="8 sites, No reported glycans"/>
</dbReference>
<dbReference type="GO" id="GO:0044167">
    <property type="term" value="C:host cell endoplasmic reticulum membrane"/>
    <property type="evidence" value="ECO:0007669"/>
    <property type="project" value="UniProtKB-SubCell"/>
</dbReference>
<dbReference type="GO" id="GO:0044178">
    <property type="term" value="C:host cell Golgi membrane"/>
    <property type="evidence" value="ECO:0007669"/>
    <property type="project" value="UniProtKB-SubCell"/>
</dbReference>
<dbReference type="GO" id="GO:0020002">
    <property type="term" value="C:host cell plasma membrane"/>
    <property type="evidence" value="ECO:0007669"/>
    <property type="project" value="UniProtKB-SubCell"/>
</dbReference>
<dbReference type="GO" id="GO:0016020">
    <property type="term" value="C:membrane"/>
    <property type="evidence" value="ECO:0007669"/>
    <property type="project" value="UniProtKB-UniRule"/>
</dbReference>
<dbReference type="GO" id="GO:0019031">
    <property type="term" value="C:viral envelope"/>
    <property type="evidence" value="ECO:0007669"/>
    <property type="project" value="UniProtKB-UniRule"/>
</dbReference>
<dbReference type="GO" id="GO:0055036">
    <property type="term" value="C:virion membrane"/>
    <property type="evidence" value="ECO:0007669"/>
    <property type="project" value="UniProtKB-SubCell"/>
</dbReference>
<dbReference type="GO" id="GO:0046872">
    <property type="term" value="F:metal ion binding"/>
    <property type="evidence" value="ECO:0007669"/>
    <property type="project" value="UniProtKB-KW"/>
</dbReference>
<dbReference type="GO" id="GO:0039654">
    <property type="term" value="P:fusion of virus membrane with host endosome membrane"/>
    <property type="evidence" value="ECO:0007669"/>
    <property type="project" value="UniProtKB-UniRule"/>
</dbReference>
<dbReference type="GO" id="GO:0019065">
    <property type="term" value="P:receptor-mediated endocytosis of virus by host cell"/>
    <property type="evidence" value="ECO:0007669"/>
    <property type="project" value="UniProtKB-UniRule"/>
</dbReference>
<dbReference type="GO" id="GO:0019062">
    <property type="term" value="P:virion attachment to host cell"/>
    <property type="evidence" value="ECO:0007669"/>
    <property type="project" value="UniProtKB-UniRule"/>
</dbReference>
<dbReference type="Gene3D" id="6.10.140.1590">
    <property type="match status" value="1"/>
</dbReference>
<dbReference type="Gene3D" id="2.20.28.180">
    <property type="entry name" value="Arenavirus glycoprotein, zinc binding domain"/>
    <property type="match status" value="1"/>
</dbReference>
<dbReference type="HAMAP" id="MF_04084">
    <property type="entry name" value="ARENA_GPC"/>
    <property type="match status" value="1"/>
</dbReference>
<dbReference type="InterPro" id="IPR001535">
    <property type="entry name" value="Arena_glycoprot"/>
</dbReference>
<dbReference type="InterPro" id="IPR043015">
    <property type="entry name" value="Arena_glycoprot_zinc-bd"/>
</dbReference>
<dbReference type="Pfam" id="PF00798">
    <property type="entry name" value="Arena_glycoprot"/>
    <property type="match status" value="1"/>
</dbReference>
<dbReference type="PIRSF" id="PIRSF004028">
    <property type="entry name" value="GPC_ArenaV"/>
    <property type="match status" value="1"/>
</dbReference>
<keyword id="KW-1015">Disulfide bond</keyword>
<keyword id="KW-1170">Fusion of virus membrane with host endosomal membrane</keyword>
<keyword id="KW-1168">Fusion of virus membrane with host membrane</keyword>
<keyword id="KW-0325">Glycoprotein</keyword>
<keyword id="KW-1032">Host cell membrane</keyword>
<keyword id="KW-1038">Host endoplasmic reticulum</keyword>
<keyword id="KW-1040">Host Golgi apparatus</keyword>
<keyword id="KW-1043">Host membrane</keyword>
<keyword id="KW-0945">Host-virus interaction</keyword>
<keyword id="KW-0449">Lipoprotein</keyword>
<keyword id="KW-0472">Membrane</keyword>
<keyword id="KW-0479">Metal-binding</keyword>
<keyword id="KW-0519">Myristate</keyword>
<keyword id="KW-0812">Transmembrane</keyword>
<keyword id="KW-1133">Transmembrane helix</keyword>
<keyword id="KW-1161">Viral attachment to host cell</keyword>
<keyword id="KW-0261">Viral envelope protein</keyword>
<keyword id="KW-1162">Viral penetration into host cytoplasm</keyword>
<keyword id="KW-0946">Virion</keyword>
<keyword id="KW-1164">Virus endocytosis by host</keyword>
<keyword id="KW-1160">Virus entry into host cell</keyword>
<keyword id="KW-0862">Zinc</keyword>
<feature type="initiator methionine" description="Removed; by host" evidence="2">
    <location>
        <position position="1"/>
    </location>
</feature>
<feature type="chain" id="PRO_0000353868" description="Pre-glycoprotein polyprotein GP complex" evidence="2">
    <location>
        <begin position="2"/>
        <end position="482"/>
    </location>
</feature>
<feature type="chain" id="PRO_0000353869" description="Stable signal peptide" evidence="2">
    <location>
        <begin position="2"/>
        <end position="58"/>
    </location>
</feature>
<feature type="chain" id="PRO_0000036615" description="Glycoprotein G1" evidence="2">
    <location>
        <begin position="59"/>
        <end position="249"/>
    </location>
</feature>
<feature type="chain" id="PRO_0000036616" description="Glycoprotein G2" evidence="2">
    <location>
        <begin position="250"/>
        <end position="482"/>
    </location>
</feature>
<feature type="topological domain" description="Extracellular" evidence="2">
    <location>
        <begin position="2"/>
        <end position="17"/>
    </location>
</feature>
<feature type="transmembrane region" description="Helical" evidence="2">
    <location>
        <begin position="18"/>
        <end position="32"/>
    </location>
</feature>
<feature type="topological domain" description="Cytoplasmic" evidence="2">
    <location>
        <position position="33"/>
    </location>
</feature>
<feature type="transmembrane region" description="Helical" evidence="2">
    <location>
        <begin position="34"/>
        <end position="53"/>
    </location>
</feature>
<feature type="topological domain" description="Extracellular" evidence="2">
    <location>
        <begin position="54"/>
        <end position="58"/>
    </location>
</feature>
<feature type="topological domain" description="Extracellular" evidence="2">
    <location>
        <begin position="59"/>
        <end position="421"/>
    </location>
</feature>
<feature type="transmembrane region" description="Helical" evidence="2">
    <location>
        <begin position="422"/>
        <end position="442"/>
    </location>
</feature>
<feature type="topological domain" description="Cytoplasmic" evidence="2">
    <location>
        <begin position="443"/>
        <end position="482"/>
    </location>
</feature>
<feature type="binding site" evidence="2">
    <location>
        <position position="57"/>
    </location>
    <ligand>
        <name>Zn(2+)</name>
        <dbReference type="ChEBI" id="CHEBI:29105"/>
        <label>1</label>
    </ligand>
</feature>
<feature type="binding site" evidence="2">
    <location>
        <position position="444"/>
    </location>
    <ligand>
        <name>Zn(2+)</name>
        <dbReference type="ChEBI" id="CHEBI:29105"/>
        <label>2</label>
    </ligand>
</feature>
<feature type="binding site" evidence="2">
    <location>
        <position position="446"/>
    </location>
    <ligand>
        <name>Zn(2+)</name>
        <dbReference type="ChEBI" id="CHEBI:29105"/>
        <label>2</label>
    </ligand>
</feature>
<feature type="binding site" evidence="2">
    <location>
        <position position="452"/>
    </location>
    <ligand>
        <name>Zn(2+)</name>
        <dbReference type="ChEBI" id="CHEBI:29105"/>
        <label>2</label>
    </ligand>
</feature>
<feature type="binding site" evidence="2">
    <location>
        <position position="456"/>
    </location>
    <ligand>
        <name>Zn(2+)</name>
        <dbReference type="ChEBI" id="CHEBI:29105"/>
        <label>1</label>
    </ligand>
</feature>
<feature type="binding site" evidence="2">
    <location>
        <position position="464"/>
    </location>
    <ligand>
        <name>Zn(2+)</name>
        <dbReference type="ChEBI" id="CHEBI:29105"/>
        <label>1</label>
    </ligand>
</feature>
<feature type="binding site" evidence="2">
    <location>
        <position position="466"/>
    </location>
    <ligand>
        <name>Zn(2+)</name>
        <dbReference type="ChEBI" id="CHEBI:29105"/>
        <label>1</label>
    </ligand>
</feature>
<feature type="binding site" evidence="2">
    <location>
        <position position="482"/>
    </location>
    <ligand>
        <name>Zn(2+)</name>
        <dbReference type="ChEBI" id="CHEBI:29105"/>
        <label>2</label>
    </ligand>
</feature>
<feature type="site" description="Important for GP-C-mediated membrane fusion" evidence="1">
    <location>
        <position position="33"/>
    </location>
</feature>
<feature type="site" description="Cleavage; by host signal peptidase" evidence="2">
    <location>
        <begin position="58"/>
        <end position="59"/>
    </location>
</feature>
<feature type="site" description="Cleavage; by host MBTPS1" evidence="2">
    <location>
        <begin position="249"/>
        <end position="250"/>
    </location>
</feature>
<feature type="lipid moiety-binding region" description="N-myristoyl glycine; by host" evidence="2">
    <location>
        <position position="2"/>
    </location>
</feature>
<feature type="glycosylation site" description="N-linked (GlcNAc...) asparagine; by host" evidence="2">
    <location>
        <position position="83"/>
    </location>
</feature>
<feature type="glycosylation site" description="N-linked (GlcNAc...) asparagine; by host" evidence="2">
    <location>
        <position position="95"/>
    </location>
</feature>
<feature type="glycosylation site" description="N-linked (GlcNAc...) asparagine; by host" evidence="2">
    <location>
        <position position="164"/>
    </location>
</feature>
<feature type="glycosylation site" description="N-linked (GlcNAc...) asparagine; by host" evidence="2">
    <location>
        <position position="176"/>
    </location>
</feature>
<feature type="glycosylation site" description="N-linked (GlcNAc...) asparagine; by host" evidence="2">
    <location>
        <position position="354"/>
    </location>
</feature>
<feature type="glycosylation site" description="N-linked (GlcNAc...) asparagine; by host" evidence="2">
    <location>
        <position position="362"/>
    </location>
</feature>
<feature type="glycosylation site" description="N-linked (GlcNAc...) asparagine; by host" evidence="2">
    <location>
        <position position="379"/>
    </location>
</feature>
<feature type="glycosylation site" description="N-linked (GlcNAc...) asparagine; by host" evidence="2">
    <location>
        <position position="384"/>
    </location>
</feature>
<feature type="disulfide bond" evidence="2">
    <location>
        <begin position="92"/>
        <end position="224"/>
    </location>
</feature>
<feature type="disulfide bond" evidence="2">
    <location>
        <begin position="134"/>
        <end position="162"/>
    </location>
</feature>
<feature type="disulfide bond" evidence="2">
    <location>
        <begin position="205"/>
        <end position="211"/>
    </location>
</feature>
<feature type="disulfide bond" evidence="2">
    <location>
        <begin position="269"/>
        <end position="282"/>
    </location>
</feature>
<feature type="disulfide bond" evidence="2">
    <location>
        <begin position="353"/>
        <end position="374"/>
    </location>
</feature>
<gene>
    <name evidence="2" type="primary">GPC</name>
    <name type="synonym">GP-C</name>
</gene>
<comment type="function">
    <molecule>Glycoprotein G2</molecule>
    <text evidence="2">Class I viral fusion protein that directs fusion of viral and host endosomal membranes, leading to delivery of the nucleocapsid into the cytoplasm. Membrane fusion is mediated by irreversible conformational changes induced upon acidification in the endosome.</text>
</comment>
<comment type="function">
    <text evidence="2">Stable signal peptide (SSP): cleaved and functions as a signal peptide. In addition, it is also retained as the third component of the GP complex. The SSP is required for efficient glycoprotein expression, post-translational maturation cleavage of GP1 and GP2, glycoprotein transport to the cell surface plasma membrane, formation of infectious virus particles, and acid pH-dependent glycoprotein-mediated cell fusion.</text>
</comment>
<comment type="function">
    <molecule>Glycoprotein G1</molecule>
    <text evidence="2">Interacts with the host receptor.</text>
</comment>
<comment type="subunit">
    <molecule>Glycoprotein G1</molecule>
    <text evidence="2">Homotetramer; disulfide-linked.</text>
</comment>
<comment type="subunit">
    <molecule>Glycoprotein G2</molecule>
    <text evidence="2">Homotetramer. GP2 homotetramers bind through ionic interactions with GP1 homotetramers to form the GP complex together with the stable signal peptide. The GP-C polyprotein interacts with the host protease MBTPS1/SKI-1 resulting in the polyprotein processing.</text>
</comment>
<comment type="subcellular location">
    <molecule>Glycoprotein G1</molecule>
    <subcellularLocation>
        <location evidence="2">Virion membrane</location>
        <topology evidence="2">Peripheral membrane protein</topology>
    </subcellularLocation>
    <subcellularLocation>
        <location evidence="2">Host endoplasmic reticulum membrane</location>
        <topology evidence="2">Peripheral membrane protein</topology>
    </subcellularLocation>
    <subcellularLocation>
        <location evidence="2">Host Golgi apparatus membrane</location>
        <topology evidence="2">Peripheral membrane protein</topology>
    </subcellularLocation>
    <subcellularLocation>
        <location evidence="2">Host cell membrane</location>
        <topology evidence="2">Peripheral membrane protein</topology>
    </subcellularLocation>
</comment>
<comment type="subcellular location">
    <molecule>Glycoprotein G2</molecule>
    <subcellularLocation>
        <location evidence="2">Virion membrane</location>
        <topology evidence="2">Single-pass membrane protein</topology>
    </subcellularLocation>
    <subcellularLocation>
        <location evidence="2">Host endoplasmic reticulum membrane</location>
        <topology evidence="2">Single-pass membrane protein</topology>
    </subcellularLocation>
    <subcellularLocation>
        <location evidence="2">Host Golgi apparatus membrane</location>
        <topology evidence="2">Single-pass membrane protein</topology>
    </subcellularLocation>
    <subcellularLocation>
        <location evidence="2">Host cell membrane</location>
        <topology evidence="2">Single-pass membrane protein</topology>
    </subcellularLocation>
    <text evidence="2">Binding to the stable signal peptide masks endogenous ER localization signals in the cytoplasmic domain of G2 to ensure that only the fully assembled, tripartite GP complex is transported for virion assembly.</text>
</comment>
<comment type="subcellular location">
    <molecule>Stable signal peptide</molecule>
    <subcellularLocation>
        <location evidence="2">Virion membrane</location>
        <topology evidence="2">Multi-pass membrane protein</topology>
    </subcellularLocation>
    <subcellularLocation>
        <location evidence="2">Host endoplasmic reticulum membrane</location>
        <topology evidence="2">Multi-pass membrane protein</topology>
    </subcellularLocation>
    <subcellularLocation>
        <location evidence="2">Host Golgi apparatus membrane</location>
        <topology evidence="2">Multi-pass membrane protein</topology>
    </subcellularLocation>
    <subcellularLocation>
        <location evidence="2">Host cell membrane</location>
        <topology evidence="2">Multi-pass membrane protein</topology>
    </subcellularLocation>
</comment>
<comment type="domain">
    <text evidence="2">The cytoplasmic domain of GP2 plays a role in ER location. It also contains a zinc-binding domain that allows SSP retention in the GPC complex by accepting a cysteine from SSP as the fourth ligand.</text>
</comment>
<comment type="PTM">
    <molecule>Pre-glycoprotein polyprotein GP complex</molecule>
    <text evidence="2">Specific enzymatic cleavages in vivo yield mature proteins. GP-C polyprotein is cleaved in the endoplasmic reticulum by the host protease MBTPS1. Only cleaved glycoprotein is incorporated into virions.</text>
</comment>
<comment type="PTM">
    <molecule>Stable signal peptide</molecule>
    <text evidence="2">The SSP remains stably associated with the GP complex following cleavage by signal peptidase and plays crucial roles in the trafficking of GP through the secretory pathway.</text>
</comment>
<comment type="PTM">
    <molecule>Stable signal peptide</molecule>
    <text evidence="2">Myristoylation is necessary for GP2-mediated fusion activity.</text>
</comment>
<comment type="similarity">
    <text evidence="2">Belongs to the arenaviridae GPC protein family.</text>
</comment>
<reference key="1">
    <citation type="journal article" date="1991" name="J. Gen. Virol.">
        <title>Analysis of the glycoprotein gene of Tacaribe virus and neutralization-resistant variants.</title>
        <authorList>
            <person name="Allison L.M.C."/>
            <person name="Salter M.W.A.P."/>
            <person name="Kiguwa S."/>
            <person name="Howard C.R."/>
        </authorList>
    </citation>
    <scope>NUCLEOTIDE SEQUENCE [GENOMIC RNA]</scope>
</reference>